<organism>
    <name type="scientific">Yersinia pestis bv. Antiqua (strain Antiqua)</name>
    <dbReference type="NCBI Taxonomy" id="360102"/>
    <lineage>
        <taxon>Bacteria</taxon>
        <taxon>Pseudomonadati</taxon>
        <taxon>Pseudomonadota</taxon>
        <taxon>Gammaproteobacteria</taxon>
        <taxon>Enterobacterales</taxon>
        <taxon>Yersiniaceae</taxon>
        <taxon>Yersinia</taxon>
    </lineage>
</organism>
<name>PDXH_YERPA</name>
<gene>
    <name evidence="1" type="primary">pdxH</name>
    <name type="ordered locus">YPA_1716</name>
</gene>
<reference key="1">
    <citation type="journal article" date="2006" name="J. Bacteriol.">
        <title>Complete genome sequence of Yersinia pestis strains Antiqua and Nepal516: evidence of gene reduction in an emerging pathogen.</title>
        <authorList>
            <person name="Chain P.S.G."/>
            <person name="Hu P."/>
            <person name="Malfatti S.A."/>
            <person name="Radnedge L."/>
            <person name="Larimer F."/>
            <person name="Vergez L.M."/>
            <person name="Worsham P."/>
            <person name="Chu M.C."/>
            <person name="Andersen G.L."/>
        </authorList>
    </citation>
    <scope>NUCLEOTIDE SEQUENCE [LARGE SCALE GENOMIC DNA]</scope>
    <source>
        <strain>Antiqua</strain>
    </source>
</reference>
<comment type="function">
    <text evidence="1">Catalyzes the oxidation of either pyridoxine 5'-phosphate (PNP) or pyridoxamine 5'-phosphate (PMP) into pyridoxal 5'-phosphate (PLP).</text>
</comment>
<comment type="catalytic activity">
    <reaction evidence="1">
        <text>pyridoxamine 5'-phosphate + O2 + H2O = pyridoxal 5'-phosphate + H2O2 + NH4(+)</text>
        <dbReference type="Rhea" id="RHEA:15817"/>
        <dbReference type="ChEBI" id="CHEBI:15377"/>
        <dbReference type="ChEBI" id="CHEBI:15379"/>
        <dbReference type="ChEBI" id="CHEBI:16240"/>
        <dbReference type="ChEBI" id="CHEBI:28938"/>
        <dbReference type="ChEBI" id="CHEBI:58451"/>
        <dbReference type="ChEBI" id="CHEBI:597326"/>
        <dbReference type="EC" id="1.4.3.5"/>
    </reaction>
</comment>
<comment type="catalytic activity">
    <reaction evidence="1">
        <text>pyridoxine 5'-phosphate + O2 = pyridoxal 5'-phosphate + H2O2</text>
        <dbReference type="Rhea" id="RHEA:15149"/>
        <dbReference type="ChEBI" id="CHEBI:15379"/>
        <dbReference type="ChEBI" id="CHEBI:16240"/>
        <dbReference type="ChEBI" id="CHEBI:58589"/>
        <dbReference type="ChEBI" id="CHEBI:597326"/>
        <dbReference type="EC" id="1.4.3.5"/>
    </reaction>
</comment>
<comment type="cofactor">
    <cofactor evidence="1">
        <name>FMN</name>
        <dbReference type="ChEBI" id="CHEBI:58210"/>
    </cofactor>
    <text evidence="1">Binds 1 FMN per subunit.</text>
</comment>
<comment type="pathway">
    <text evidence="1">Cofactor metabolism; pyridoxal 5'-phosphate salvage; pyridoxal 5'-phosphate from pyridoxamine 5'-phosphate: step 1/1.</text>
</comment>
<comment type="pathway">
    <text evidence="1">Cofactor metabolism; pyridoxal 5'-phosphate salvage; pyridoxal 5'-phosphate from pyridoxine 5'-phosphate: step 1/1.</text>
</comment>
<comment type="subunit">
    <text evidence="1">Homodimer.</text>
</comment>
<comment type="similarity">
    <text evidence="1">Belongs to the pyridoxamine 5'-phosphate oxidase family.</text>
</comment>
<comment type="sequence caution" evidence="2">
    <conflict type="erroneous initiation">
        <sequence resource="EMBL-CDS" id="ABG13682"/>
    </conflict>
</comment>
<evidence type="ECO:0000255" key="1">
    <source>
        <dbReference type="HAMAP-Rule" id="MF_01629"/>
    </source>
</evidence>
<evidence type="ECO:0000305" key="2"/>
<sequence>MTENNEFDVADLRREYIRGGLRRSDLTENPLELFERWLKQACEARLPDPTAMCVATVDTNGQPYQRIVLLKHYDDQGLVFYTNLGSRKAQQLAENPHISLLFPWHMLDRQVIFLGKAERLSTLEVLKYFHSRPKDSQIGAWVSQQSSRISARGVLESKFLELKQKFQQGDVPLPSFWGGFRVKFDSVEFWQGGEHRLHDRFIYQREADAWKIDRLAP</sequence>
<dbReference type="EC" id="1.4.3.5" evidence="1"/>
<dbReference type="EMBL" id="CP000308">
    <property type="protein sequence ID" value="ABG13682.1"/>
    <property type="status" value="ALT_INIT"/>
    <property type="molecule type" value="Genomic_DNA"/>
</dbReference>
<dbReference type="RefSeq" id="WP_002210959.1">
    <property type="nucleotide sequence ID" value="NZ_CP009906.1"/>
</dbReference>
<dbReference type="SMR" id="Q1C790"/>
<dbReference type="GeneID" id="57976305"/>
<dbReference type="KEGG" id="ypa:YPA_1716"/>
<dbReference type="UniPathway" id="UPA01068">
    <property type="reaction ID" value="UER00304"/>
</dbReference>
<dbReference type="UniPathway" id="UPA01068">
    <property type="reaction ID" value="UER00305"/>
</dbReference>
<dbReference type="Proteomes" id="UP000001971">
    <property type="component" value="Chromosome"/>
</dbReference>
<dbReference type="GO" id="GO:0010181">
    <property type="term" value="F:FMN binding"/>
    <property type="evidence" value="ECO:0007669"/>
    <property type="project" value="UniProtKB-UniRule"/>
</dbReference>
<dbReference type="GO" id="GO:0004733">
    <property type="term" value="F:pyridoxamine phosphate oxidase activity"/>
    <property type="evidence" value="ECO:0007669"/>
    <property type="project" value="UniProtKB-UniRule"/>
</dbReference>
<dbReference type="GO" id="GO:0008615">
    <property type="term" value="P:pyridoxine biosynthetic process"/>
    <property type="evidence" value="ECO:0007669"/>
    <property type="project" value="UniProtKB-KW"/>
</dbReference>
<dbReference type="FunFam" id="2.30.110.10:FF:000001">
    <property type="entry name" value="Pyridoxine/pyridoxamine 5'-phosphate oxidase"/>
    <property type="match status" value="1"/>
</dbReference>
<dbReference type="Gene3D" id="2.30.110.10">
    <property type="entry name" value="Electron Transport, Fmn-binding Protein, Chain A"/>
    <property type="match status" value="1"/>
</dbReference>
<dbReference type="HAMAP" id="MF_01629">
    <property type="entry name" value="PdxH"/>
    <property type="match status" value="1"/>
</dbReference>
<dbReference type="InterPro" id="IPR000659">
    <property type="entry name" value="Pyridox_Oxase"/>
</dbReference>
<dbReference type="InterPro" id="IPR019740">
    <property type="entry name" value="Pyridox_Oxase_CS"/>
</dbReference>
<dbReference type="InterPro" id="IPR011576">
    <property type="entry name" value="Pyridox_Oxase_N"/>
</dbReference>
<dbReference type="InterPro" id="IPR019576">
    <property type="entry name" value="Pyridoxamine_oxidase_dimer_C"/>
</dbReference>
<dbReference type="InterPro" id="IPR012349">
    <property type="entry name" value="Split_barrel_FMN-bd"/>
</dbReference>
<dbReference type="NCBIfam" id="TIGR00558">
    <property type="entry name" value="pdxH"/>
    <property type="match status" value="1"/>
</dbReference>
<dbReference type="NCBIfam" id="NF004231">
    <property type="entry name" value="PRK05679.1"/>
    <property type="match status" value="1"/>
</dbReference>
<dbReference type="PANTHER" id="PTHR10851:SF0">
    <property type="entry name" value="PYRIDOXINE-5'-PHOSPHATE OXIDASE"/>
    <property type="match status" value="1"/>
</dbReference>
<dbReference type="PANTHER" id="PTHR10851">
    <property type="entry name" value="PYRIDOXINE-5-PHOSPHATE OXIDASE"/>
    <property type="match status" value="1"/>
</dbReference>
<dbReference type="Pfam" id="PF10590">
    <property type="entry name" value="PNP_phzG_C"/>
    <property type="match status" value="1"/>
</dbReference>
<dbReference type="Pfam" id="PF01243">
    <property type="entry name" value="PNPOx_N"/>
    <property type="match status" value="1"/>
</dbReference>
<dbReference type="PIRSF" id="PIRSF000190">
    <property type="entry name" value="Pyd_amn-ph_oxd"/>
    <property type="match status" value="1"/>
</dbReference>
<dbReference type="SUPFAM" id="SSF50475">
    <property type="entry name" value="FMN-binding split barrel"/>
    <property type="match status" value="1"/>
</dbReference>
<dbReference type="PROSITE" id="PS01064">
    <property type="entry name" value="PYRIDOX_OXIDASE"/>
    <property type="match status" value="1"/>
</dbReference>
<keyword id="KW-0285">Flavoprotein</keyword>
<keyword id="KW-0288">FMN</keyword>
<keyword id="KW-0560">Oxidoreductase</keyword>
<keyword id="KW-0664">Pyridoxine biosynthesis</keyword>
<protein>
    <recommendedName>
        <fullName evidence="1">Pyridoxine/pyridoxamine 5'-phosphate oxidase</fullName>
        <ecNumber evidence="1">1.4.3.5</ecNumber>
    </recommendedName>
    <alternativeName>
        <fullName evidence="1">PNP/PMP oxidase</fullName>
        <shortName evidence="1">PNPOx</shortName>
    </alternativeName>
    <alternativeName>
        <fullName evidence="1">Pyridoxal 5'-phosphate synthase</fullName>
    </alternativeName>
</protein>
<accession>Q1C790</accession>
<feature type="chain" id="PRO_0000255897" description="Pyridoxine/pyridoxamine 5'-phosphate oxidase">
    <location>
        <begin position="1"/>
        <end position="217"/>
    </location>
</feature>
<feature type="binding site" evidence="1">
    <location>
        <begin position="13"/>
        <end position="16"/>
    </location>
    <ligand>
        <name>substrate</name>
    </ligand>
</feature>
<feature type="binding site" evidence="1">
    <location>
        <begin position="66"/>
        <end position="71"/>
    </location>
    <ligand>
        <name>FMN</name>
        <dbReference type="ChEBI" id="CHEBI:58210"/>
    </ligand>
</feature>
<feature type="binding site" evidence="1">
    <location>
        <position position="71"/>
    </location>
    <ligand>
        <name>substrate</name>
    </ligand>
</feature>
<feature type="binding site" evidence="1">
    <location>
        <begin position="81"/>
        <end position="82"/>
    </location>
    <ligand>
        <name>FMN</name>
        <dbReference type="ChEBI" id="CHEBI:58210"/>
    </ligand>
</feature>
<feature type="binding site" evidence="1">
    <location>
        <position position="87"/>
    </location>
    <ligand>
        <name>FMN</name>
        <dbReference type="ChEBI" id="CHEBI:58210"/>
    </ligand>
</feature>
<feature type="binding site" evidence="1">
    <location>
        <position position="88"/>
    </location>
    <ligand>
        <name>FMN</name>
        <dbReference type="ChEBI" id="CHEBI:58210"/>
    </ligand>
</feature>
<feature type="binding site" evidence="1">
    <location>
        <position position="110"/>
    </location>
    <ligand>
        <name>FMN</name>
        <dbReference type="ChEBI" id="CHEBI:58210"/>
    </ligand>
</feature>
<feature type="binding site" evidence="1">
    <location>
        <position position="128"/>
    </location>
    <ligand>
        <name>substrate</name>
    </ligand>
</feature>
<feature type="binding site" evidence="1">
    <location>
        <position position="132"/>
    </location>
    <ligand>
        <name>substrate</name>
    </ligand>
</feature>
<feature type="binding site" evidence="1">
    <location>
        <position position="136"/>
    </location>
    <ligand>
        <name>substrate</name>
    </ligand>
</feature>
<feature type="binding site" evidence="1">
    <location>
        <begin position="145"/>
        <end position="146"/>
    </location>
    <ligand>
        <name>FMN</name>
        <dbReference type="ChEBI" id="CHEBI:58210"/>
    </ligand>
</feature>
<feature type="binding site" evidence="1">
    <location>
        <position position="190"/>
    </location>
    <ligand>
        <name>FMN</name>
        <dbReference type="ChEBI" id="CHEBI:58210"/>
    </ligand>
</feature>
<feature type="binding site" evidence="1">
    <location>
        <begin position="196"/>
        <end position="198"/>
    </location>
    <ligand>
        <name>substrate</name>
    </ligand>
</feature>
<feature type="binding site" evidence="1">
    <location>
        <position position="200"/>
    </location>
    <ligand>
        <name>FMN</name>
        <dbReference type="ChEBI" id="CHEBI:58210"/>
    </ligand>
</feature>
<proteinExistence type="inferred from homology"/>